<protein>
    <recommendedName>
        <fullName>Vacuolar membrane-associated protein IML1</fullName>
    </recommendedName>
</protein>
<name>IML1_PICST</name>
<gene>
    <name type="primary">IML1</name>
    <name type="ORF">PICST_82645</name>
</gene>
<sequence>MQHARIFNSGGQSRRNHSGSSNVLSSQSLSKSNSMNSMSASQMSIQIGASRVTSSSSGNHFMNRNMRSTITVGKKHAPIEQQIHQTQTPNLTSTVQPNLKDPIPLTVWFHDLRTSDEDVIIDSNAIPGGVRNGQVYMLQSLETEDSKKLLFVINDRNIRDNNAAAQDDLQSSKFQISLISNPLQKLLDIPPRSLVQIKRIQNLAKVEADSVEIFIKDVNLSRDSMWNFSSTLVNSCVHIDKRLLFLNNRTGIVKYIYKNGRNVFSGYIGENTKVTFRSESAKLTVLVQLSREMWHFEENGEIMFHKLVNNLFPKMFKRWRDRNTHHAITIVLFTSMDLTDIPWTTLGQGERPNNRRDYFRVVVDQVNIFHWDKIMANLRLEFANFKRDIMLNQQDTNHYTMDGEPLPSVKGNILEAVNLGMTLANNRFINTDLKHSLNHYIVVTPGTGIYDVDYELMLETSKKMSTIDYGLDIICLSQPPLHVVPLFRFSKDGKVKHVVPNWCDISYYKDSNQSANSWIPRCKIYELQMMGVMENNMNQIRIDRFQVTQKAPTMIEAMDNYDNDLFKPVNHRKYIKENDEKAIDSYEIKEKNNSKFKPTTLKNANATLSLIFNNRTRLQPTELTPSNSSVLGTVTHSNGEALSTLYNLNKISDDRTISSLAPSISSTRSISSKRSMDILRKETHSPRLIKSDSLFKTETGASTPAEPRTTKSVERERKSRHLMKHYESENPTDIFWTEIENPSQEYRADTLLYPNVSRWSNAFPDKIRRRLVKWRSLQSPAALPITTSVFPSVKILETEYTFQIYNVLLNYENYLELETTHELMREMIQLRLLLGFQICFGDQVKKAESERKPAGNVESLIKYLPRHSSLGARIYMSLGDEIHRIYLDYNGNLNVQLYHKTVTNEENKITLGQAKLTNYFPLIRTRYADEYSTAKIDGINSKPKMYNWNQFDQYLAGYEDAMPDANKDFYKMKFVVMPAPIPKNAFYITNENLTDEEIRVEGLRKLIAMIEKGKYLKRKVTSKKEEILPEIVFYTGNLYDFLNEEAQNFDNTGNQAGLMIPESMRFNKSIKLSELAEELQTRSTGLPLVDRTWHFKRHLHCFLGSELVSWLLECFEDIQTRDEATSYGQSLMNKGLFKHVESRHGFLDGYYFYEFESEYIDKTYIESKKGWFGIKKTSSEKPDTDSNTPVYTRNNSDVESLSSPALPSQDPLDLKRITSTLITDSGASSLEGSRRRKKFILSRAVKYNVDSLGKSFRPEIVTVHYDRVHNPEHCYHIRLQWLSTTGRFIDEAITNWSRLCERHGLKLVETPWKELCNIPSISPFHSFVDIKLCVNPLVDPEFSDVKILRKNRFYYHLYFLKKFEFLLDNRSSLFFSKDSIEISYSWGKPSFQYAQYIHKNGTYIIELRDNGDFFLAPNNIHITRVNTTLTSIPDFDGSITTYNTNSQQVMLNFRSACQNEDYLKELFREAKSNWREEFPLDMMPTDLPQ</sequence>
<reference key="1">
    <citation type="journal article" date="2007" name="Nat. Biotechnol.">
        <title>Genome sequence of the lignocellulose-bioconverting and xylose-fermenting yeast Pichia stipitis.</title>
        <authorList>
            <person name="Jeffries T.W."/>
            <person name="Grigoriev I.V."/>
            <person name="Grimwood J."/>
            <person name="Laplaza J.M."/>
            <person name="Aerts A."/>
            <person name="Salamov A."/>
            <person name="Schmutz J."/>
            <person name="Lindquist E."/>
            <person name="Dehal P."/>
            <person name="Shapiro H."/>
            <person name="Jin Y.-S."/>
            <person name="Passoth V."/>
            <person name="Richardson P.M."/>
        </authorList>
    </citation>
    <scope>NUCLEOTIDE SEQUENCE [LARGE SCALE GENOMIC DNA]</scope>
    <source>
        <strain>ATCC 58785 / CBS 6054 / NBRC 10063 / NRRL Y-11545</strain>
    </source>
</reference>
<accession>A3LRB2</accession>
<keyword id="KW-0472">Membrane</keyword>
<keyword id="KW-1185">Reference proteome</keyword>
<keyword id="KW-0926">Vacuole</keyword>
<organism>
    <name type="scientific">Scheffersomyces stipitis (strain ATCC 58785 / CBS 6054 / NBRC 10063 / NRRL Y-11545)</name>
    <name type="common">Yeast</name>
    <name type="synonym">Pichia stipitis</name>
    <dbReference type="NCBI Taxonomy" id="322104"/>
    <lineage>
        <taxon>Eukaryota</taxon>
        <taxon>Fungi</taxon>
        <taxon>Dikarya</taxon>
        <taxon>Ascomycota</taxon>
        <taxon>Saccharomycotina</taxon>
        <taxon>Pichiomycetes</taxon>
        <taxon>Debaryomycetaceae</taxon>
        <taxon>Scheffersomyces</taxon>
    </lineage>
</organism>
<evidence type="ECO:0000250" key="1"/>
<evidence type="ECO:0000255" key="2">
    <source>
        <dbReference type="PROSITE-ProRule" id="PRU00066"/>
    </source>
</evidence>
<evidence type="ECO:0000256" key="3">
    <source>
        <dbReference type="SAM" id="MobiDB-lite"/>
    </source>
</evidence>
<evidence type="ECO:0000305" key="4"/>
<comment type="subcellular location">
    <subcellularLocation>
        <location evidence="1">Vacuole membrane</location>
        <topology evidence="1">Peripheral membrane protein</topology>
    </subcellularLocation>
</comment>
<comment type="similarity">
    <text evidence="4">Belongs to the IML1 family.</text>
</comment>
<dbReference type="EMBL" id="CP000497">
    <property type="protein sequence ID" value="ABN65709.2"/>
    <property type="molecule type" value="Genomic_DNA"/>
</dbReference>
<dbReference type="RefSeq" id="XP_001383738.2">
    <property type="nucleotide sequence ID" value="XM_001383701.1"/>
</dbReference>
<dbReference type="SMR" id="A3LRB2"/>
<dbReference type="FunCoup" id="A3LRB2">
    <property type="interactions" value="689"/>
</dbReference>
<dbReference type="STRING" id="322104.A3LRB2"/>
<dbReference type="GeneID" id="4837902"/>
<dbReference type="KEGG" id="pic:PICST_82645"/>
<dbReference type="eggNOG" id="KOG3572">
    <property type="taxonomic scope" value="Eukaryota"/>
</dbReference>
<dbReference type="HOGENOM" id="CLU_000935_1_1_1"/>
<dbReference type="InParanoid" id="A3LRB2"/>
<dbReference type="OMA" id="RTWHFKR"/>
<dbReference type="OrthoDB" id="39497at2759"/>
<dbReference type="Proteomes" id="UP000002258">
    <property type="component" value="Chromosome 3"/>
</dbReference>
<dbReference type="GO" id="GO:1990130">
    <property type="term" value="C:GATOR1 complex"/>
    <property type="evidence" value="ECO:0007669"/>
    <property type="project" value="EnsemblFungi"/>
</dbReference>
<dbReference type="GO" id="GO:0005774">
    <property type="term" value="C:vacuolar membrane"/>
    <property type="evidence" value="ECO:0007669"/>
    <property type="project" value="UniProtKB-SubCell"/>
</dbReference>
<dbReference type="GO" id="GO:0005096">
    <property type="term" value="F:GTPase activator activity"/>
    <property type="evidence" value="ECO:0007669"/>
    <property type="project" value="EnsemblFungi"/>
</dbReference>
<dbReference type="GO" id="GO:0006995">
    <property type="term" value="P:cellular response to nitrogen starvation"/>
    <property type="evidence" value="ECO:0007669"/>
    <property type="project" value="EnsemblFungi"/>
</dbReference>
<dbReference type="GO" id="GO:0034599">
    <property type="term" value="P:cellular response to oxidative stress"/>
    <property type="evidence" value="ECO:0007669"/>
    <property type="project" value="EnsemblFungi"/>
</dbReference>
<dbReference type="GO" id="GO:0035556">
    <property type="term" value="P:intracellular signal transduction"/>
    <property type="evidence" value="ECO:0007669"/>
    <property type="project" value="InterPro"/>
</dbReference>
<dbReference type="GO" id="GO:0051058">
    <property type="term" value="P:negative regulation of small GTPase mediated signal transduction"/>
    <property type="evidence" value="ECO:0007669"/>
    <property type="project" value="EnsemblFungi"/>
</dbReference>
<dbReference type="GO" id="GO:1904262">
    <property type="term" value="P:negative regulation of TORC1 signaling"/>
    <property type="evidence" value="ECO:0007669"/>
    <property type="project" value="EnsemblFungi"/>
</dbReference>
<dbReference type="GO" id="GO:0010508">
    <property type="term" value="P:positive regulation of autophagy"/>
    <property type="evidence" value="ECO:0007669"/>
    <property type="project" value="EnsemblFungi"/>
</dbReference>
<dbReference type="GO" id="GO:2000785">
    <property type="term" value="P:regulation of autophagosome assembly"/>
    <property type="evidence" value="ECO:0007669"/>
    <property type="project" value="EnsemblFungi"/>
</dbReference>
<dbReference type="CDD" id="cd04449">
    <property type="entry name" value="DEP_DEPDC5-like"/>
    <property type="match status" value="1"/>
</dbReference>
<dbReference type="Gene3D" id="1.10.10.10">
    <property type="entry name" value="Winged helix-like DNA-binding domain superfamily/Winged helix DNA-binding domain"/>
    <property type="match status" value="1"/>
</dbReference>
<dbReference type="InterPro" id="IPR000591">
    <property type="entry name" value="DEP_dom"/>
</dbReference>
<dbReference type="InterPro" id="IPR027244">
    <property type="entry name" value="IML1"/>
</dbReference>
<dbReference type="InterPro" id="IPR048255">
    <property type="entry name" value="IML1_N"/>
</dbReference>
<dbReference type="InterPro" id="IPR036388">
    <property type="entry name" value="WH-like_DNA-bd_sf"/>
</dbReference>
<dbReference type="InterPro" id="IPR036390">
    <property type="entry name" value="WH_DNA-bd_sf"/>
</dbReference>
<dbReference type="PANTHER" id="PTHR13179">
    <property type="entry name" value="DEP DOMAIN CONTAINING PROTEIN 5"/>
    <property type="match status" value="1"/>
</dbReference>
<dbReference type="PANTHER" id="PTHR13179:SF8">
    <property type="entry name" value="GATOR COMPLEX PROTEIN DEPDC5"/>
    <property type="match status" value="1"/>
</dbReference>
<dbReference type="Pfam" id="PF00610">
    <property type="entry name" value="DEP"/>
    <property type="match status" value="1"/>
</dbReference>
<dbReference type="Pfam" id="PF12257">
    <property type="entry name" value="IML1"/>
    <property type="match status" value="1"/>
</dbReference>
<dbReference type="SMART" id="SM00049">
    <property type="entry name" value="DEP"/>
    <property type="match status" value="1"/>
</dbReference>
<dbReference type="SUPFAM" id="SSF46785">
    <property type="entry name" value="Winged helix' DNA-binding domain"/>
    <property type="match status" value="1"/>
</dbReference>
<dbReference type="PROSITE" id="PS50186">
    <property type="entry name" value="DEP"/>
    <property type="match status" value="1"/>
</dbReference>
<proteinExistence type="inferred from homology"/>
<feature type="chain" id="PRO_0000301777" description="Vacuolar membrane-associated protein IML1">
    <location>
        <begin position="1"/>
        <end position="1489"/>
    </location>
</feature>
<feature type="domain" description="DEP" evidence="2">
    <location>
        <begin position="1082"/>
        <end position="1157"/>
    </location>
</feature>
<feature type="region of interest" description="Disordered" evidence="3">
    <location>
        <begin position="1"/>
        <end position="61"/>
    </location>
</feature>
<feature type="region of interest" description="Disordered" evidence="3">
    <location>
        <begin position="694"/>
        <end position="718"/>
    </location>
</feature>
<feature type="region of interest" description="Disordered" evidence="3">
    <location>
        <begin position="1176"/>
        <end position="1209"/>
    </location>
</feature>
<feature type="compositionally biased region" description="Low complexity" evidence="3">
    <location>
        <begin position="18"/>
        <end position="46"/>
    </location>
</feature>
<feature type="compositionally biased region" description="Polar residues" evidence="3">
    <location>
        <begin position="51"/>
        <end position="61"/>
    </location>
</feature>
<feature type="compositionally biased region" description="Basic and acidic residues" evidence="3">
    <location>
        <begin position="708"/>
        <end position="717"/>
    </location>
</feature>
<feature type="compositionally biased region" description="Polar residues" evidence="3">
    <location>
        <begin position="1185"/>
        <end position="1206"/>
    </location>
</feature>